<evidence type="ECO:0000255" key="1">
    <source>
        <dbReference type="HAMAP-Rule" id="MF_00444"/>
    </source>
</evidence>
<reference key="1">
    <citation type="submission" date="2007-03" db="EMBL/GenBank/DDBJ databases">
        <title>Sequencing analysis of Lobularia maritima chloroplast DNA.</title>
        <authorList>
            <person name="Hosouchi T."/>
            <person name="Tsuruoka H."/>
            <person name="Kotani H."/>
        </authorList>
    </citation>
    <scope>NUCLEOTIDE SEQUENCE [LARGE SCALE GENOMIC DNA]</scope>
</reference>
<proteinExistence type="inferred from homology"/>
<keyword id="KW-0150">Chloroplast</keyword>
<keyword id="KW-0378">Hydrolase</keyword>
<keyword id="KW-0934">Plastid</keyword>
<keyword id="KW-0645">Protease</keyword>
<keyword id="KW-0720">Serine protease</keyword>
<geneLocation type="chloroplast"/>
<protein>
    <recommendedName>
        <fullName evidence="1">ATP-dependent Clp protease proteolytic subunit</fullName>
        <ecNumber evidence="1">3.4.21.92</ecNumber>
    </recommendedName>
    <alternativeName>
        <fullName evidence="1">Endopeptidase Clp</fullName>
    </alternativeName>
</protein>
<feature type="chain" id="PRO_0000309304" description="ATP-dependent Clp protease proteolytic subunit">
    <location>
        <begin position="1"/>
        <end position="196"/>
    </location>
</feature>
<feature type="active site" description="Nucleophile" evidence="1">
    <location>
        <position position="101"/>
    </location>
</feature>
<feature type="active site" evidence="1">
    <location>
        <position position="126"/>
    </location>
</feature>
<comment type="function">
    <text evidence="1">Cleaves peptides in various proteins in a process that requires ATP hydrolysis. Has a chymotrypsin-like activity. Plays a major role in the degradation of misfolded proteins.</text>
</comment>
<comment type="catalytic activity">
    <reaction evidence="1">
        <text>Hydrolysis of proteins to small peptides in the presence of ATP and magnesium. alpha-casein is the usual test substrate. In the absence of ATP, only oligopeptides shorter than five residues are hydrolyzed (such as succinyl-Leu-Tyr-|-NHMec, and Leu-Tyr-Leu-|-Tyr-Trp, in which cleavage of the -Tyr-|-Leu- and -Tyr-|-Trp bonds also occurs).</text>
        <dbReference type="EC" id="3.4.21.92"/>
    </reaction>
</comment>
<comment type="subunit">
    <text>Component of the chloroplastic Clp protease core complex.</text>
</comment>
<comment type="subcellular location">
    <subcellularLocation>
        <location evidence="1">Plastid</location>
        <location evidence="1">Chloroplast stroma</location>
    </subcellularLocation>
</comment>
<comment type="similarity">
    <text evidence="1">Belongs to the peptidase S14 family.</text>
</comment>
<name>CLPP_LOBMA</name>
<gene>
    <name evidence="1" type="primary">clpP</name>
</gene>
<dbReference type="EC" id="3.4.21.92" evidence="1"/>
<dbReference type="EMBL" id="AP009375">
    <property type="protein sequence ID" value="BAF50574.1"/>
    <property type="molecule type" value="Genomic_DNA"/>
</dbReference>
<dbReference type="RefSeq" id="YP_001123750.1">
    <property type="nucleotide sequence ID" value="NC_009274.1"/>
</dbReference>
<dbReference type="SMR" id="A4QLL9"/>
<dbReference type="GeneID" id="4964892"/>
<dbReference type="GO" id="GO:0009570">
    <property type="term" value="C:chloroplast stroma"/>
    <property type="evidence" value="ECO:0007669"/>
    <property type="project" value="UniProtKB-SubCell"/>
</dbReference>
<dbReference type="GO" id="GO:0009368">
    <property type="term" value="C:endopeptidase Clp complex"/>
    <property type="evidence" value="ECO:0007669"/>
    <property type="project" value="TreeGrafter"/>
</dbReference>
<dbReference type="GO" id="GO:0004176">
    <property type="term" value="F:ATP-dependent peptidase activity"/>
    <property type="evidence" value="ECO:0007669"/>
    <property type="project" value="InterPro"/>
</dbReference>
<dbReference type="GO" id="GO:0051117">
    <property type="term" value="F:ATPase binding"/>
    <property type="evidence" value="ECO:0007669"/>
    <property type="project" value="TreeGrafter"/>
</dbReference>
<dbReference type="GO" id="GO:0004252">
    <property type="term" value="F:serine-type endopeptidase activity"/>
    <property type="evidence" value="ECO:0007669"/>
    <property type="project" value="UniProtKB-UniRule"/>
</dbReference>
<dbReference type="GO" id="GO:0006515">
    <property type="term" value="P:protein quality control for misfolded or incompletely synthesized proteins"/>
    <property type="evidence" value="ECO:0007669"/>
    <property type="project" value="TreeGrafter"/>
</dbReference>
<dbReference type="CDD" id="cd07017">
    <property type="entry name" value="S14_ClpP_2"/>
    <property type="match status" value="1"/>
</dbReference>
<dbReference type="FunFam" id="3.90.226.10:FF:000006">
    <property type="entry name" value="ATP-dependent Clp protease proteolytic subunit"/>
    <property type="match status" value="1"/>
</dbReference>
<dbReference type="Gene3D" id="3.90.226.10">
    <property type="entry name" value="2-enoyl-CoA Hydratase, Chain A, domain 1"/>
    <property type="match status" value="1"/>
</dbReference>
<dbReference type="HAMAP" id="MF_00444">
    <property type="entry name" value="ClpP"/>
    <property type="match status" value="1"/>
</dbReference>
<dbReference type="InterPro" id="IPR001907">
    <property type="entry name" value="ClpP"/>
</dbReference>
<dbReference type="InterPro" id="IPR029045">
    <property type="entry name" value="ClpP/crotonase-like_dom_sf"/>
</dbReference>
<dbReference type="InterPro" id="IPR023562">
    <property type="entry name" value="ClpP/TepA"/>
</dbReference>
<dbReference type="InterPro" id="IPR033135">
    <property type="entry name" value="ClpP_His_AS"/>
</dbReference>
<dbReference type="PANTHER" id="PTHR10381">
    <property type="entry name" value="ATP-DEPENDENT CLP PROTEASE PROTEOLYTIC SUBUNIT"/>
    <property type="match status" value="1"/>
</dbReference>
<dbReference type="PANTHER" id="PTHR10381:SF15">
    <property type="entry name" value="CHLOROPLASTIC ATP-DEPENDENT CLP PROTEASE PROTEOLYTIC SUBUNIT 1"/>
    <property type="match status" value="1"/>
</dbReference>
<dbReference type="Pfam" id="PF00574">
    <property type="entry name" value="CLP_protease"/>
    <property type="match status" value="1"/>
</dbReference>
<dbReference type="PRINTS" id="PR00127">
    <property type="entry name" value="CLPPROTEASEP"/>
</dbReference>
<dbReference type="SUPFAM" id="SSF52096">
    <property type="entry name" value="ClpP/crotonase"/>
    <property type="match status" value="1"/>
</dbReference>
<dbReference type="PROSITE" id="PS00382">
    <property type="entry name" value="CLP_PROTEASE_HIS"/>
    <property type="match status" value="1"/>
</dbReference>
<organism>
    <name type="scientific">Lobularia maritima</name>
    <name type="common">Sweet alyssum</name>
    <name type="synonym">Alyssum maritimum</name>
    <dbReference type="NCBI Taxonomy" id="226051"/>
    <lineage>
        <taxon>Eukaryota</taxon>
        <taxon>Viridiplantae</taxon>
        <taxon>Streptophyta</taxon>
        <taxon>Embryophyta</taxon>
        <taxon>Tracheophyta</taxon>
        <taxon>Spermatophyta</taxon>
        <taxon>Magnoliopsida</taxon>
        <taxon>eudicotyledons</taxon>
        <taxon>Gunneridae</taxon>
        <taxon>Pentapetalae</taxon>
        <taxon>rosids</taxon>
        <taxon>malvids</taxon>
        <taxon>Brassicales</taxon>
        <taxon>Brassicaceae</taxon>
        <taxon>Anastaticeae</taxon>
        <taxon>Lobularia</taxon>
    </lineage>
</organism>
<accession>A4QLL9</accession>
<sequence>MPIGVPKVPFRSPGEGDTSWVDIYNRLYRERLFFLGQEVDTEISNQLISLMIYLSIEKDTKDLYLFINSPGGWVISGMAIYDTMQFVRPDVQTICMGLAASIASFILVGGEITKRIAFPHARVMIHQPASSFYEAQTGEFILEAEELLKLRETITRVYVQRTGKPIWVVSEDMERDVFMSATEAQAHGIVDLVAVQ</sequence>